<reference key="1">
    <citation type="journal article" date="1997" name="Nature">
        <title>Genomic sequence of a Lyme disease spirochaete, Borrelia burgdorferi.</title>
        <authorList>
            <person name="Fraser C.M."/>
            <person name="Casjens S."/>
            <person name="Huang W.M."/>
            <person name="Sutton G.G."/>
            <person name="Clayton R.A."/>
            <person name="Lathigra R."/>
            <person name="White O."/>
            <person name="Ketchum K.A."/>
            <person name="Dodson R.J."/>
            <person name="Hickey E.K."/>
            <person name="Gwinn M.L."/>
            <person name="Dougherty B.A."/>
            <person name="Tomb J.-F."/>
            <person name="Fleischmann R.D."/>
            <person name="Richardson D.L."/>
            <person name="Peterson J.D."/>
            <person name="Kerlavage A.R."/>
            <person name="Quackenbush J."/>
            <person name="Salzberg S.L."/>
            <person name="Hanson M."/>
            <person name="van Vugt R."/>
            <person name="Palmer N."/>
            <person name="Adams M.D."/>
            <person name="Gocayne J.D."/>
            <person name="Weidman J.F."/>
            <person name="Utterback T.R."/>
            <person name="Watthey L."/>
            <person name="McDonald L.A."/>
            <person name="Artiach P."/>
            <person name="Bowman C."/>
            <person name="Garland S.A."/>
            <person name="Fujii C."/>
            <person name="Cotton M.D."/>
            <person name="Horst K."/>
            <person name="Roberts K.M."/>
            <person name="Hatch B."/>
            <person name="Smith H.O."/>
            <person name="Venter J.C."/>
        </authorList>
    </citation>
    <scope>NUCLEOTIDE SEQUENCE [LARGE SCALE GENOMIC DNA]</scope>
    <source>
        <strain>ATCC 35210 / DSM 4680 / CIP 102532 / B31</strain>
    </source>
</reference>
<organism>
    <name type="scientific">Borreliella burgdorferi (strain ATCC 35210 / DSM 4680 / CIP 102532 / B31)</name>
    <name type="common">Borrelia burgdorferi</name>
    <dbReference type="NCBI Taxonomy" id="224326"/>
    <lineage>
        <taxon>Bacteria</taxon>
        <taxon>Pseudomonadati</taxon>
        <taxon>Spirochaetota</taxon>
        <taxon>Spirochaetia</taxon>
        <taxon>Spirochaetales</taxon>
        <taxon>Borreliaceae</taxon>
        <taxon>Borreliella</taxon>
    </lineage>
</organism>
<feature type="chain" id="PRO_0000158060" description="Probable protein-glutamate methylesterase BB_0415">
    <location>
        <begin position="1"/>
        <end position="375"/>
    </location>
</feature>
<feature type="domain" description="Response regulatory" evidence="2">
    <location>
        <begin position="6"/>
        <end position="120"/>
    </location>
</feature>
<feature type="domain" description="CheB-type methylesterase" evidence="1">
    <location>
        <begin position="183"/>
        <end position="375"/>
    </location>
</feature>
<feature type="active site" evidence="1">
    <location>
        <position position="195"/>
    </location>
</feature>
<feature type="active site" evidence="1">
    <location>
        <position position="221"/>
    </location>
</feature>
<feature type="active site" evidence="1">
    <location>
        <position position="317"/>
    </location>
</feature>
<dbReference type="EC" id="3.1.1.61"/>
<dbReference type="EMBL" id="AE000783">
    <property type="protein sequence ID" value="AAC66789.1"/>
    <property type="molecule type" value="Genomic_DNA"/>
</dbReference>
<dbReference type="PIR" id="F70151">
    <property type="entry name" value="F70151"/>
</dbReference>
<dbReference type="RefSeq" id="NP_212549.1">
    <property type="nucleotide sequence ID" value="NC_001318.1"/>
</dbReference>
<dbReference type="RefSeq" id="WP_002657881.1">
    <property type="nucleotide sequence ID" value="NC_001318.1"/>
</dbReference>
<dbReference type="SMR" id="O51376"/>
<dbReference type="STRING" id="224326.BB_0415"/>
<dbReference type="PaxDb" id="224326-BB_0415"/>
<dbReference type="EnsemblBacteria" id="AAC66789">
    <property type="protein sequence ID" value="AAC66789"/>
    <property type="gene ID" value="BB_0415"/>
</dbReference>
<dbReference type="KEGG" id="bbu:BB_0415"/>
<dbReference type="PATRIC" id="fig|224326.49.peg.809"/>
<dbReference type="HOGENOM" id="CLU_000445_51_0_12"/>
<dbReference type="OrthoDB" id="9793421at2"/>
<dbReference type="Proteomes" id="UP000001807">
    <property type="component" value="Chromosome"/>
</dbReference>
<dbReference type="GO" id="GO:0005737">
    <property type="term" value="C:cytoplasm"/>
    <property type="evidence" value="ECO:0007669"/>
    <property type="project" value="InterPro"/>
</dbReference>
<dbReference type="GO" id="GO:0000156">
    <property type="term" value="F:phosphorelay response regulator activity"/>
    <property type="evidence" value="ECO:0007669"/>
    <property type="project" value="InterPro"/>
</dbReference>
<dbReference type="GO" id="GO:0008984">
    <property type="term" value="F:protein-glutamate methylesterase activity"/>
    <property type="evidence" value="ECO:0007669"/>
    <property type="project" value="UniProtKB-EC"/>
</dbReference>
<dbReference type="GO" id="GO:0006935">
    <property type="term" value="P:chemotaxis"/>
    <property type="evidence" value="ECO:0007669"/>
    <property type="project" value="InterPro"/>
</dbReference>
<dbReference type="CDD" id="cd16432">
    <property type="entry name" value="CheB_Rec"/>
    <property type="match status" value="1"/>
</dbReference>
<dbReference type="Gene3D" id="3.40.50.2300">
    <property type="match status" value="1"/>
</dbReference>
<dbReference type="Gene3D" id="3.40.50.180">
    <property type="entry name" value="Methylesterase CheB, C-terminal domain"/>
    <property type="match status" value="1"/>
</dbReference>
<dbReference type="InterPro" id="IPR008248">
    <property type="entry name" value="CheB-like"/>
</dbReference>
<dbReference type="InterPro" id="IPR035909">
    <property type="entry name" value="CheB_C"/>
</dbReference>
<dbReference type="InterPro" id="IPR011006">
    <property type="entry name" value="CheY-like_superfamily"/>
</dbReference>
<dbReference type="InterPro" id="IPR000673">
    <property type="entry name" value="Sig_transdc_resp-reg_Me-estase"/>
</dbReference>
<dbReference type="InterPro" id="IPR001789">
    <property type="entry name" value="Sig_transdc_resp-reg_receiver"/>
</dbReference>
<dbReference type="PANTHER" id="PTHR42872">
    <property type="entry name" value="PROTEIN-GLUTAMATE METHYLESTERASE/PROTEIN-GLUTAMINE GLUTAMINASE"/>
    <property type="match status" value="1"/>
</dbReference>
<dbReference type="PANTHER" id="PTHR42872:SF3">
    <property type="entry name" value="PROTEIN-GLUTAMATE METHYLESTERASE_PROTEIN-GLUTAMINE GLUTAMINASE 1"/>
    <property type="match status" value="1"/>
</dbReference>
<dbReference type="Pfam" id="PF01339">
    <property type="entry name" value="CheB_methylest"/>
    <property type="match status" value="1"/>
</dbReference>
<dbReference type="PIRSF" id="PIRSF000876">
    <property type="entry name" value="RR_chemtxs_CheB"/>
    <property type="match status" value="1"/>
</dbReference>
<dbReference type="SUPFAM" id="SSF52172">
    <property type="entry name" value="CheY-like"/>
    <property type="match status" value="1"/>
</dbReference>
<dbReference type="SUPFAM" id="SSF52738">
    <property type="entry name" value="Methylesterase CheB, C-terminal domain"/>
    <property type="match status" value="1"/>
</dbReference>
<dbReference type="PROSITE" id="PS50122">
    <property type="entry name" value="CHEB"/>
    <property type="match status" value="1"/>
</dbReference>
<dbReference type="PROSITE" id="PS50110">
    <property type="entry name" value="RESPONSE_REGULATORY"/>
    <property type="match status" value="1"/>
</dbReference>
<comment type="catalytic activity">
    <reaction>
        <text>[protein]-L-glutamate 5-O-methyl ester + H2O = L-glutamyl-[protein] + methanol + H(+)</text>
        <dbReference type="Rhea" id="RHEA:23236"/>
        <dbReference type="Rhea" id="RHEA-COMP:10208"/>
        <dbReference type="Rhea" id="RHEA-COMP:10311"/>
        <dbReference type="ChEBI" id="CHEBI:15377"/>
        <dbReference type="ChEBI" id="CHEBI:15378"/>
        <dbReference type="ChEBI" id="CHEBI:17790"/>
        <dbReference type="ChEBI" id="CHEBI:29973"/>
        <dbReference type="ChEBI" id="CHEBI:82795"/>
        <dbReference type="EC" id="3.1.1.61"/>
    </reaction>
</comment>
<protein>
    <recommendedName>
        <fullName>Probable protein-glutamate methylesterase BB_0415</fullName>
        <ecNumber>3.1.1.61</ecNumber>
    </recommendedName>
</protein>
<accession>O51376</accession>
<name>Y415_BORBU</name>
<proteinExistence type="predicted"/>
<sequence length="375" mass="41609">METKISVLIIEYFAVKRKLISDLINSSPKLQVIATASNSKFATNKLKKHKPEVILMNLEENNIKDILFLEEKNSLNKTIPIVVTSSNQNLINIAASKGADDLILVSKNKKSHEIKKEQIINSLLAYGSISIKNKIACNKDMKTKNYERANFILNHKNDISSLNQLEEHAKEKTLNEKEIKKLKLRKFDIIAIGVSAGGPVALKSILPEIPESFPPIIIVQHMPKGFTEEFAKNLNNLCKISVKETTNNEILKQGYAYISSGGYHTKIKKIDGNYQIKTLDGKHINGHKPSIGVLFQSIAEIAKDKAIAIIMTGMGNDGSREIGDIKKAGGLTIAQDKESSMVFGMPKIAIKENNIDYIVPLSHMVKLLKAILINS</sequence>
<evidence type="ECO:0000255" key="1">
    <source>
        <dbReference type="PROSITE-ProRule" id="PRU00050"/>
    </source>
</evidence>
<evidence type="ECO:0000255" key="2">
    <source>
        <dbReference type="PROSITE-ProRule" id="PRU00169"/>
    </source>
</evidence>
<keyword id="KW-0378">Hydrolase</keyword>
<keyword id="KW-1185">Reference proteome</keyword>
<gene>
    <name type="ordered locus">BB_0415</name>
</gene>